<gene>
    <name evidence="1" type="primary">dcd</name>
    <name type="ordered locus">SCO3678</name>
    <name type="ORF">SCH35.46</name>
</gene>
<protein>
    <recommendedName>
        <fullName evidence="1">dCTP deaminase, dUMP-forming</fullName>
        <ecNumber evidence="1">3.5.4.30</ecNumber>
    </recommendedName>
    <alternativeName>
        <fullName evidence="1">Bifunctional dCTP deaminase:dUTPase</fullName>
    </alternativeName>
    <alternativeName>
        <fullName evidence="1">DCD-DUT</fullName>
    </alternativeName>
</protein>
<evidence type="ECO:0000255" key="1">
    <source>
        <dbReference type="HAMAP-Rule" id="MF_00146"/>
    </source>
</evidence>
<comment type="function">
    <text evidence="1">Bifunctional enzyme that catalyzes both the deamination of dCTP to dUTP and the hydrolysis of dUTP to dUMP without releasing the toxic dUTP intermediate.</text>
</comment>
<comment type="catalytic activity">
    <reaction evidence="1">
        <text>dCTP + 2 H2O = dUMP + NH4(+) + diphosphate</text>
        <dbReference type="Rhea" id="RHEA:19205"/>
        <dbReference type="ChEBI" id="CHEBI:15377"/>
        <dbReference type="ChEBI" id="CHEBI:28938"/>
        <dbReference type="ChEBI" id="CHEBI:33019"/>
        <dbReference type="ChEBI" id="CHEBI:61481"/>
        <dbReference type="ChEBI" id="CHEBI:246422"/>
        <dbReference type="EC" id="3.5.4.30"/>
    </reaction>
</comment>
<comment type="pathway">
    <text evidence="1">Pyrimidine metabolism; dUMP biosynthesis; dUMP from dCTP: step 1/1.</text>
</comment>
<comment type="subunit">
    <text evidence="1">Homotrimer.</text>
</comment>
<comment type="similarity">
    <text evidence="1">Belongs to the dCTP deaminase family.</text>
</comment>
<sequence>MLLSDKDIRAEIDNGRVRIDPFDDSMVQPSSIDVRLDRYFRVFENHRYPHIDPSVEQVDLTRLVEPEGDEPFILHPGEFVLASTYEVVSLPDDLASRLEGKSSLGRLGLVTHSTAGFIDPGFSGHVTLELSNLATLPIKLWPGMKIGQLCLFRLTSPAEHPYGSERYGSRYQGQRGPTASRSFLNFHRTQV</sequence>
<keyword id="KW-0378">Hydrolase</keyword>
<keyword id="KW-0546">Nucleotide metabolism</keyword>
<keyword id="KW-0547">Nucleotide-binding</keyword>
<keyword id="KW-1185">Reference proteome</keyword>
<reference key="1">
    <citation type="journal article" date="2002" name="Nature">
        <title>Complete genome sequence of the model actinomycete Streptomyces coelicolor A3(2).</title>
        <authorList>
            <person name="Bentley S.D."/>
            <person name="Chater K.F."/>
            <person name="Cerdeno-Tarraga A.-M."/>
            <person name="Challis G.L."/>
            <person name="Thomson N.R."/>
            <person name="James K.D."/>
            <person name="Harris D.E."/>
            <person name="Quail M.A."/>
            <person name="Kieser H."/>
            <person name="Harper D."/>
            <person name="Bateman A."/>
            <person name="Brown S."/>
            <person name="Chandra G."/>
            <person name="Chen C.W."/>
            <person name="Collins M."/>
            <person name="Cronin A."/>
            <person name="Fraser A."/>
            <person name="Goble A."/>
            <person name="Hidalgo J."/>
            <person name="Hornsby T."/>
            <person name="Howarth S."/>
            <person name="Huang C.-H."/>
            <person name="Kieser T."/>
            <person name="Larke L."/>
            <person name="Murphy L.D."/>
            <person name="Oliver K."/>
            <person name="O'Neil S."/>
            <person name="Rabbinowitsch E."/>
            <person name="Rajandream M.A."/>
            <person name="Rutherford K.M."/>
            <person name="Rutter S."/>
            <person name="Seeger K."/>
            <person name="Saunders D."/>
            <person name="Sharp S."/>
            <person name="Squares R."/>
            <person name="Squares S."/>
            <person name="Taylor K."/>
            <person name="Warren T."/>
            <person name="Wietzorrek A."/>
            <person name="Woodward J.R."/>
            <person name="Barrell B.G."/>
            <person name="Parkhill J."/>
            <person name="Hopwood D.A."/>
        </authorList>
    </citation>
    <scope>NUCLEOTIDE SEQUENCE [LARGE SCALE GENOMIC DNA]</scope>
    <source>
        <strain>ATCC BAA-471 / A3(2) / M145</strain>
    </source>
</reference>
<proteinExistence type="inferred from homology"/>
<organism>
    <name type="scientific">Streptomyces coelicolor (strain ATCC BAA-471 / A3(2) / M145)</name>
    <dbReference type="NCBI Taxonomy" id="100226"/>
    <lineage>
        <taxon>Bacteria</taxon>
        <taxon>Bacillati</taxon>
        <taxon>Actinomycetota</taxon>
        <taxon>Actinomycetes</taxon>
        <taxon>Kitasatosporales</taxon>
        <taxon>Streptomycetaceae</taxon>
        <taxon>Streptomyces</taxon>
        <taxon>Streptomyces albidoflavus group</taxon>
    </lineage>
</organism>
<name>DCDB_STRCO</name>
<dbReference type="EC" id="3.5.4.30" evidence="1"/>
<dbReference type="EMBL" id="AL939117">
    <property type="protein sequence ID" value="CAB44381.1"/>
    <property type="molecule type" value="Genomic_DNA"/>
</dbReference>
<dbReference type="PIR" id="T36613">
    <property type="entry name" value="T36613"/>
</dbReference>
<dbReference type="RefSeq" id="NP_627870.1">
    <property type="nucleotide sequence ID" value="NC_003888.3"/>
</dbReference>
<dbReference type="RefSeq" id="WP_003975261.1">
    <property type="nucleotide sequence ID" value="NZ_VNID01000003.1"/>
</dbReference>
<dbReference type="SMR" id="Q9X8W0"/>
<dbReference type="FunCoup" id="Q9X8W0">
    <property type="interactions" value="33"/>
</dbReference>
<dbReference type="STRING" id="100226.gene:17761301"/>
<dbReference type="PaxDb" id="100226-SCO3678"/>
<dbReference type="GeneID" id="91385364"/>
<dbReference type="KEGG" id="sco:SCO3678"/>
<dbReference type="PATRIC" id="fig|100226.15.peg.3737"/>
<dbReference type="eggNOG" id="COG0717">
    <property type="taxonomic scope" value="Bacteria"/>
</dbReference>
<dbReference type="HOGENOM" id="CLU_087476_2_0_11"/>
<dbReference type="InParanoid" id="Q9X8W0"/>
<dbReference type="OrthoDB" id="9780956at2"/>
<dbReference type="PhylomeDB" id="Q9X8W0"/>
<dbReference type="UniPathway" id="UPA00610">
    <property type="reaction ID" value="UER00667"/>
</dbReference>
<dbReference type="Proteomes" id="UP000001973">
    <property type="component" value="Chromosome"/>
</dbReference>
<dbReference type="GO" id="GO:0033973">
    <property type="term" value="F:dCTP deaminase (dUMP-forming) activity"/>
    <property type="evidence" value="ECO:0007669"/>
    <property type="project" value="UniProtKB-UniRule"/>
</dbReference>
<dbReference type="GO" id="GO:0008829">
    <property type="term" value="F:dCTP deaminase activity"/>
    <property type="evidence" value="ECO:0000318"/>
    <property type="project" value="GO_Central"/>
</dbReference>
<dbReference type="GO" id="GO:0000166">
    <property type="term" value="F:nucleotide binding"/>
    <property type="evidence" value="ECO:0007669"/>
    <property type="project" value="UniProtKB-KW"/>
</dbReference>
<dbReference type="GO" id="GO:0006226">
    <property type="term" value="P:dUMP biosynthetic process"/>
    <property type="evidence" value="ECO:0007669"/>
    <property type="project" value="UniProtKB-UniRule"/>
</dbReference>
<dbReference type="GO" id="GO:0006229">
    <property type="term" value="P:dUTP biosynthetic process"/>
    <property type="evidence" value="ECO:0007669"/>
    <property type="project" value="InterPro"/>
</dbReference>
<dbReference type="GO" id="GO:0015949">
    <property type="term" value="P:nucleobase-containing small molecule interconversion"/>
    <property type="evidence" value="ECO:0000318"/>
    <property type="project" value="GO_Central"/>
</dbReference>
<dbReference type="CDD" id="cd07557">
    <property type="entry name" value="trimeric_dUTPase"/>
    <property type="match status" value="1"/>
</dbReference>
<dbReference type="FunFam" id="2.70.40.10:FF:000005">
    <property type="entry name" value="dCTP deaminase, dUMP-forming"/>
    <property type="match status" value="1"/>
</dbReference>
<dbReference type="Gene3D" id="2.70.40.10">
    <property type="match status" value="1"/>
</dbReference>
<dbReference type="HAMAP" id="MF_00146">
    <property type="entry name" value="dCTP_deaminase"/>
    <property type="match status" value="1"/>
</dbReference>
<dbReference type="InterPro" id="IPR011962">
    <property type="entry name" value="dCTP_deaminase"/>
</dbReference>
<dbReference type="InterPro" id="IPR036157">
    <property type="entry name" value="dUTPase-like_sf"/>
</dbReference>
<dbReference type="InterPro" id="IPR033704">
    <property type="entry name" value="dUTPase_trimeric"/>
</dbReference>
<dbReference type="NCBIfam" id="TIGR02274">
    <property type="entry name" value="dCTP_deam"/>
    <property type="match status" value="1"/>
</dbReference>
<dbReference type="PANTHER" id="PTHR42680">
    <property type="entry name" value="DCTP DEAMINASE"/>
    <property type="match status" value="1"/>
</dbReference>
<dbReference type="PANTHER" id="PTHR42680:SF3">
    <property type="entry name" value="DCTP DEAMINASE"/>
    <property type="match status" value="1"/>
</dbReference>
<dbReference type="Pfam" id="PF22769">
    <property type="entry name" value="DCD"/>
    <property type="match status" value="1"/>
</dbReference>
<dbReference type="SUPFAM" id="SSF51283">
    <property type="entry name" value="dUTPase-like"/>
    <property type="match status" value="1"/>
</dbReference>
<accession>Q9X8W0</accession>
<feature type="chain" id="PRO_0000156015" description="dCTP deaminase, dUMP-forming">
    <location>
        <begin position="1"/>
        <end position="191"/>
    </location>
</feature>
<feature type="active site" description="Proton donor/acceptor" evidence="1">
    <location>
        <position position="129"/>
    </location>
</feature>
<feature type="binding site" evidence="1">
    <location>
        <begin position="101"/>
        <end position="106"/>
    </location>
    <ligand>
        <name>dCTP</name>
        <dbReference type="ChEBI" id="CHEBI:61481"/>
    </ligand>
</feature>
<feature type="binding site" evidence="1">
    <location>
        <position position="119"/>
    </location>
    <ligand>
        <name>dCTP</name>
        <dbReference type="ChEBI" id="CHEBI:61481"/>
    </ligand>
</feature>
<feature type="binding site" evidence="1">
    <location>
        <begin position="127"/>
        <end position="129"/>
    </location>
    <ligand>
        <name>dCTP</name>
        <dbReference type="ChEBI" id="CHEBI:61481"/>
    </ligand>
</feature>
<feature type="binding site" evidence="1">
    <location>
        <position position="148"/>
    </location>
    <ligand>
        <name>dCTP</name>
        <dbReference type="ChEBI" id="CHEBI:61481"/>
    </ligand>
</feature>
<feature type="binding site" evidence="1">
    <location>
        <position position="162"/>
    </location>
    <ligand>
        <name>dCTP</name>
        <dbReference type="ChEBI" id="CHEBI:61481"/>
    </ligand>
</feature>
<feature type="binding site" evidence="1">
    <location>
        <position position="174"/>
    </location>
    <ligand>
        <name>dCTP</name>
        <dbReference type="ChEBI" id="CHEBI:61481"/>
    </ligand>
</feature>
<feature type="site" description="Important for bifunctional activity" evidence="1">
    <location>
        <begin position="116"/>
        <end position="117"/>
    </location>
</feature>